<accession>Q4JCB9</accession>
<protein>
    <recommendedName>
        <fullName evidence="1">Phosphomethylpyrimidine synthase</fullName>
        <ecNumber evidence="1">4.1.99.17</ecNumber>
    </recommendedName>
    <alternativeName>
        <fullName evidence="1">Hydroxymethylpyrimidine phosphate synthase</fullName>
        <shortName evidence="1">HMP-P synthase</shortName>
        <shortName evidence="1">HMP-phosphate synthase</shortName>
        <shortName evidence="1">HMPP synthase</shortName>
    </alternativeName>
    <alternativeName>
        <fullName evidence="1">Thiamine biosynthesis protein ThiC</fullName>
    </alternativeName>
</protein>
<reference key="1">
    <citation type="journal article" date="2005" name="J. Bacteriol.">
        <title>The genome of Sulfolobus acidocaldarius, a model organism of the Crenarchaeota.</title>
        <authorList>
            <person name="Chen L."/>
            <person name="Bruegger K."/>
            <person name="Skovgaard M."/>
            <person name="Redder P."/>
            <person name="She Q."/>
            <person name="Torarinsson E."/>
            <person name="Greve B."/>
            <person name="Awayez M."/>
            <person name="Zibat A."/>
            <person name="Klenk H.-P."/>
            <person name="Garrett R.A."/>
        </authorList>
    </citation>
    <scope>NUCLEOTIDE SEQUENCE [LARGE SCALE GENOMIC DNA]</scope>
    <source>
        <strain>ATCC 33909 / DSM 639 / JCM 8929 / NBRC 15157 / NCIMB 11770</strain>
    </source>
</reference>
<feature type="chain" id="PRO_0000152873" description="Phosphomethylpyrimidine synthase">
    <location>
        <begin position="1"/>
        <end position="428"/>
    </location>
</feature>
<feature type="binding site" evidence="1">
    <location>
        <position position="66"/>
    </location>
    <ligand>
        <name>substrate</name>
    </ligand>
</feature>
<feature type="binding site" evidence="1">
    <location>
        <position position="94"/>
    </location>
    <ligand>
        <name>substrate</name>
    </ligand>
</feature>
<feature type="binding site" evidence="1">
    <location>
        <position position="123"/>
    </location>
    <ligand>
        <name>substrate</name>
    </ligand>
</feature>
<feature type="binding site" evidence="1">
    <location>
        <position position="162"/>
    </location>
    <ligand>
        <name>substrate</name>
    </ligand>
</feature>
<feature type="binding site" evidence="1">
    <location>
        <begin position="184"/>
        <end position="186"/>
    </location>
    <ligand>
        <name>substrate</name>
    </ligand>
</feature>
<feature type="binding site" evidence="1">
    <location>
        <begin position="225"/>
        <end position="228"/>
    </location>
    <ligand>
        <name>substrate</name>
    </ligand>
</feature>
<feature type="binding site" evidence="1">
    <location>
        <position position="264"/>
    </location>
    <ligand>
        <name>substrate</name>
    </ligand>
</feature>
<feature type="binding site" evidence="1">
    <location>
        <position position="268"/>
    </location>
    <ligand>
        <name>Zn(2+)</name>
        <dbReference type="ChEBI" id="CHEBI:29105"/>
    </ligand>
</feature>
<feature type="binding site" evidence="1">
    <location>
        <position position="291"/>
    </location>
    <ligand>
        <name>substrate</name>
    </ligand>
</feature>
<feature type="binding site" evidence="1">
    <location>
        <position position="332"/>
    </location>
    <ligand>
        <name>Zn(2+)</name>
        <dbReference type="ChEBI" id="CHEBI:29105"/>
    </ligand>
</feature>
<feature type="binding site" evidence="1">
    <location>
        <position position="408"/>
    </location>
    <ligand>
        <name>[4Fe-4S] cluster</name>
        <dbReference type="ChEBI" id="CHEBI:49883"/>
        <note>4Fe-4S-S-AdoMet</note>
    </ligand>
</feature>
<feature type="binding site" evidence="1">
    <location>
        <position position="411"/>
    </location>
    <ligand>
        <name>[4Fe-4S] cluster</name>
        <dbReference type="ChEBI" id="CHEBI:49883"/>
        <note>4Fe-4S-S-AdoMet</note>
    </ligand>
</feature>
<feature type="binding site" evidence="1">
    <location>
        <position position="415"/>
    </location>
    <ligand>
        <name>[4Fe-4S] cluster</name>
        <dbReference type="ChEBI" id="CHEBI:49883"/>
        <note>4Fe-4S-S-AdoMet</note>
    </ligand>
</feature>
<sequence length="428" mass="47390">MSIIEEARRGIITDEIKSISKLEKVSPEKVRKRIAEGKIMLLRNVKRPSKKLVPIGKGLTTKININIGTSSEVIDLDMELEKVKISNKWGDTLMDLSTGGDIDEIRRKIIDKSDLPVGTVPVYQAFIQSFKKKSGGAYFSEDELLSIVERQLKDGVAFMTIHAGLTRELAIRALKSDRVIPIVSRGGDMIAGWMIHNGKENPYRTNWKYLLELFKEYDATISLGDALRPGATADAHDEFQIGELIETARLVKDAINNGVQVMVEGPGHVPLNEVAWDVKLMKKLTGGVPYYVLGPLVIDVGAPYDHIASSIGAAIASAAGADLLCYLTPAEHLSLPNAKQVEEGAIAYRIAAHAGDIVKLGKKVRKWDDEVSYYRGKLEWDKMIEKLIDPEQAYKVYTQFGEPNVKACTMCGGYCPMMWAMEQVKKIG</sequence>
<dbReference type="EC" id="4.1.99.17" evidence="1"/>
<dbReference type="EMBL" id="CP000077">
    <property type="protein sequence ID" value="AAY79560.1"/>
    <property type="molecule type" value="Genomic_DNA"/>
</dbReference>
<dbReference type="RefSeq" id="WP_011277061.1">
    <property type="nucleotide sequence ID" value="NC_007181.1"/>
</dbReference>
<dbReference type="SMR" id="Q4JCB9"/>
<dbReference type="STRING" id="330779.Saci_0137"/>
<dbReference type="GeneID" id="14550666"/>
<dbReference type="GeneID" id="78440490"/>
<dbReference type="KEGG" id="sai:Saci_0137"/>
<dbReference type="PATRIC" id="fig|330779.12.peg.128"/>
<dbReference type="eggNOG" id="arCOG02741">
    <property type="taxonomic scope" value="Archaea"/>
</dbReference>
<dbReference type="HOGENOM" id="CLU_013181_2_2_2"/>
<dbReference type="UniPathway" id="UPA00060"/>
<dbReference type="Proteomes" id="UP000001018">
    <property type="component" value="Chromosome"/>
</dbReference>
<dbReference type="GO" id="GO:0051539">
    <property type="term" value="F:4 iron, 4 sulfur cluster binding"/>
    <property type="evidence" value="ECO:0007669"/>
    <property type="project" value="UniProtKB-KW"/>
</dbReference>
<dbReference type="GO" id="GO:0016830">
    <property type="term" value="F:carbon-carbon lyase activity"/>
    <property type="evidence" value="ECO:0007669"/>
    <property type="project" value="InterPro"/>
</dbReference>
<dbReference type="GO" id="GO:0008270">
    <property type="term" value="F:zinc ion binding"/>
    <property type="evidence" value="ECO:0007669"/>
    <property type="project" value="UniProtKB-UniRule"/>
</dbReference>
<dbReference type="GO" id="GO:0009228">
    <property type="term" value="P:thiamine biosynthetic process"/>
    <property type="evidence" value="ECO:0007669"/>
    <property type="project" value="UniProtKB-KW"/>
</dbReference>
<dbReference type="GO" id="GO:0009229">
    <property type="term" value="P:thiamine diphosphate biosynthetic process"/>
    <property type="evidence" value="ECO:0007669"/>
    <property type="project" value="UniProtKB-UniRule"/>
</dbReference>
<dbReference type="Gene3D" id="3.20.20.540">
    <property type="entry name" value="Radical SAM ThiC family, central domain"/>
    <property type="match status" value="1"/>
</dbReference>
<dbReference type="HAMAP" id="MF_00089">
    <property type="entry name" value="ThiC"/>
    <property type="match status" value="1"/>
</dbReference>
<dbReference type="InterPro" id="IPR037509">
    <property type="entry name" value="ThiC"/>
</dbReference>
<dbReference type="InterPro" id="IPR038521">
    <property type="entry name" value="ThiC/Bza_core_dom"/>
</dbReference>
<dbReference type="InterPro" id="IPR002817">
    <property type="entry name" value="ThiC/BzaA/B"/>
</dbReference>
<dbReference type="NCBIfam" id="NF009895">
    <property type="entry name" value="PRK13352.1"/>
    <property type="match status" value="1"/>
</dbReference>
<dbReference type="NCBIfam" id="TIGR00190">
    <property type="entry name" value="thiC"/>
    <property type="match status" value="1"/>
</dbReference>
<dbReference type="PANTHER" id="PTHR30557:SF1">
    <property type="entry name" value="PHOSPHOMETHYLPYRIMIDINE SYNTHASE, CHLOROPLASTIC"/>
    <property type="match status" value="1"/>
</dbReference>
<dbReference type="PANTHER" id="PTHR30557">
    <property type="entry name" value="THIAMINE BIOSYNTHESIS PROTEIN THIC"/>
    <property type="match status" value="1"/>
</dbReference>
<dbReference type="Pfam" id="PF01964">
    <property type="entry name" value="ThiC_Rad_SAM"/>
    <property type="match status" value="1"/>
</dbReference>
<dbReference type="SFLD" id="SFLDF00407">
    <property type="entry name" value="phosphomethylpyrimidine_syntha"/>
    <property type="match status" value="1"/>
</dbReference>
<dbReference type="SFLD" id="SFLDG01114">
    <property type="entry name" value="phosphomethylpyrimidine_syntha"/>
    <property type="match status" value="1"/>
</dbReference>
<dbReference type="SFLD" id="SFLDS00113">
    <property type="entry name" value="Radical_SAM_Phosphomethylpyrim"/>
    <property type="match status" value="1"/>
</dbReference>
<evidence type="ECO:0000255" key="1">
    <source>
        <dbReference type="HAMAP-Rule" id="MF_00089"/>
    </source>
</evidence>
<keyword id="KW-0004">4Fe-4S</keyword>
<keyword id="KW-0408">Iron</keyword>
<keyword id="KW-0411">Iron-sulfur</keyword>
<keyword id="KW-0456">Lyase</keyword>
<keyword id="KW-0479">Metal-binding</keyword>
<keyword id="KW-1185">Reference proteome</keyword>
<keyword id="KW-0949">S-adenosyl-L-methionine</keyword>
<keyword id="KW-0784">Thiamine biosynthesis</keyword>
<keyword id="KW-0862">Zinc</keyword>
<organism>
    <name type="scientific">Sulfolobus acidocaldarius (strain ATCC 33909 / DSM 639 / JCM 8929 / NBRC 15157 / NCIMB 11770)</name>
    <dbReference type="NCBI Taxonomy" id="330779"/>
    <lineage>
        <taxon>Archaea</taxon>
        <taxon>Thermoproteota</taxon>
        <taxon>Thermoprotei</taxon>
        <taxon>Sulfolobales</taxon>
        <taxon>Sulfolobaceae</taxon>
        <taxon>Sulfolobus</taxon>
    </lineage>
</organism>
<proteinExistence type="inferred from homology"/>
<name>THIC_SULAC</name>
<comment type="function">
    <text evidence="1">Catalyzes the synthesis of the hydroxymethylpyrimidine phosphate (HMP-P) moiety of thiamine from aminoimidazole ribotide (AIR) in a radical S-adenosyl-L-methionine (SAM)-dependent reaction.</text>
</comment>
<comment type="catalytic activity">
    <reaction evidence="1">
        <text>5-amino-1-(5-phospho-beta-D-ribosyl)imidazole + S-adenosyl-L-methionine = 4-amino-2-methyl-5-(phosphooxymethyl)pyrimidine + CO + 5'-deoxyadenosine + formate + L-methionine + 3 H(+)</text>
        <dbReference type="Rhea" id="RHEA:24840"/>
        <dbReference type="ChEBI" id="CHEBI:15378"/>
        <dbReference type="ChEBI" id="CHEBI:15740"/>
        <dbReference type="ChEBI" id="CHEBI:17245"/>
        <dbReference type="ChEBI" id="CHEBI:17319"/>
        <dbReference type="ChEBI" id="CHEBI:57844"/>
        <dbReference type="ChEBI" id="CHEBI:58354"/>
        <dbReference type="ChEBI" id="CHEBI:59789"/>
        <dbReference type="ChEBI" id="CHEBI:137981"/>
        <dbReference type="EC" id="4.1.99.17"/>
    </reaction>
</comment>
<comment type="cofactor">
    <cofactor evidence="1">
        <name>[4Fe-4S] cluster</name>
        <dbReference type="ChEBI" id="CHEBI:49883"/>
    </cofactor>
    <text evidence="1">Binds 1 [4Fe-4S] cluster per subunit. The cluster is coordinated with 3 cysteines and an exchangeable S-adenosyl-L-methionine.</text>
</comment>
<comment type="pathway">
    <text evidence="1">Cofactor biosynthesis; thiamine diphosphate biosynthesis.</text>
</comment>
<comment type="similarity">
    <text evidence="1">Belongs to the ThiC family.</text>
</comment>
<gene>
    <name evidence="1" type="primary">thiC</name>
    <name type="ordered locus">Saci_0137</name>
</gene>